<proteinExistence type="inferred from homology"/>
<name>RS13_ALIB4</name>
<evidence type="ECO:0000255" key="1">
    <source>
        <dbReference type="HAMAP-Rule" id="MF_01315"/>
    </source>
</evidence>
<evidence type="ECO:0000256" key="2">
    <source>
        <dbReference type="SAM" id="MobiDB-lite"/>
    </source>
</evidence>
<evidence type="ECO:0000305" key="3"/>
<reference key="1">
    <citation type="journal article" date="2007" name="PLoS ONE">
        <title>The complete genome sequence and analysis of the Epsilonproteobacterium Arcobacter butzleri.</title>
        <authorList>
            <person name="Miller W.G."/>
            <person name="Parker C.T."/>
            <person name="Rubenfield M."/>
            <person name="Mendz G.L."/>
            <person name="Woesten M.M.S.M."/>
            <person name="Ussery D.W."/>
            <person name="Stolz J.F."/>
            <person name="Binnewies T.T."/>
            <person name="Hallin P.F."/>
            <person name="Wang G."/>
            <person name="Malek J.A."/>
            <person name="Rogosin A."/>
            <person name="Stanker L.H."/>
            <person name="Mandrell R.E."/>
        </authorList>
    </citation>
    <scope>NUCLEOTIDE SEQUENCE [LARGE SCALE GENOMIC DNA]</scope>
    <source>
        <strain>RM4018</strain>
    </source>
</reference>
<accession>A8ETK3</accession>
<gene>
    <name evidence="1" type="primary">rpsM</name>
    <name type="ordered locus">Abu_1017</name>
</gene>
<comment type="function">
    <text evidence="1">Located at the top of the head of the 30S subunit, it contacts several helices of the 16S rRNA. In the 70S ribosome it contacts the 23S rRNA (bridge B1a) and protein L5 of the 50S subunit (bridge B1b), connecting the 2 subunits; these bridges are implicated in subunit movement. Contacts the tRNAs in the A and P-sites.</text>
</comment>
<comment type="subunit">
    <text evidence="1">Part of the 30S ribosomal subunit. Forms a loose heterodimer with protein S19. Forms two bridges to the 50S subunit in the 70S ribosome.</text>
</comment>
<comment type="similarity">
    <text evidence="1">Belongs to the universal ribosomal protein uS13 family.</text>
</comment>
<feature type="chain" id="PRO_1000067515" description="Small ribosomal subunit protein uS13">
    <location>
        <begin position="1"/>
        <end position="122"/>
    </location>
</feature>
<feature type="region of interest" description="Disordered" evidence="2">
    <location>
        <begin position="95"/>
        <end position="122"/>
    </location>
</feature>
<feature type="compositionally biased region" description="Basic residues" evidence="2">
    <location>
        <begin position="95"/>
        <end position="116"/>
    </location>
</feature>
<sequence length="122" mass="13783">MARIAGVDLPNKKRMEYALTYIYGIGLHNSRLILNAVGIDFNKRAFELTEDEAAAIRKEIQENYMVEGDLRKKVAMDIKSLMDLGSYRGLRHRKGLPCRGQKTKTNARTRKGKKKTVGAATK</sequence>
<protein>
    <recommendedName>
        <fullName evidence="1">Small ribosomal subunit protein uS13</fullName>
    </recommendedName>
    <alternativeName>
        <fullName evidence="3">30S ribosomal protein S13</fullName>
    </alternativeName>
</protein>
<organism>
    <name type="scientific">Aliarcobacter butzleri (strain RM4018)</name>
    <name type="common">Arcobacter butzleri</name>
    <dbReference type="NCBI Taxonomy" id="367737"/>
    <lineage>
        <taxon>Bacteria</taxon>
        <taxon>Pseudomonadati</taxon>
        <taxon>Campylobacterota</taxon>
        <taxon>Epsilonproteobacteria</taxon>
        <taxon>Campylobacterales</taxon>
        <taxon>Arcobacteraceae</taxon>
        <taxon>Aliarcobacter</taxon>
    </lineage>
</organism>
<dbReference type="EMBL" id="CP000361">
    <property type="protein sequence ID" value="ABV67277.1"/>
    <property type="molecule type" value="Genomic_DNA"/>
</dbReference>
<dbReference type="RefSeq" id="WP_004509206.1">
    <property type="nucleotide sequence ID" value="NC_009850.1"/>
</dbReference>
<dbReference type="SMR" id="A8ETK3"/>
<dbReference type="STRING" id="367737.Abu_1017"/>
<dbReference type="GeneID" id="24304328"/>
<dbReference type="KEGG" id="abu:Abu_1017"/>
<dbReference type="eggNOG" id="COG0099">
    <property type="taxonomic scope" value="Bacteria"/>
</dbReference>
<dbReference type="HOGENOM" id="CLU_103849_1_2_7"/>
<dbReference type="Proteomes" id="UP000001136">
    <property type="component" value="Chromosome"/>
</dbReference>
<dbReference type="GO" id="GO:0005829">
    <property type="term" value="C:cytosol"/>
    <property type="evidence" value="ECO:0007669"/>
    <property type="project" value="TreeGrafter"/>
</dbReference>
<dbReference type="GO" id="GO:0015935">
    <property type="term" value="C:small ribosomal subunit"/>
    <property type="evidence" value="ECO:0007669"/>
    <property type="project" value="TreeGrafter"/>
</dbReference>
<dbReference type="GO" id="GO:0019843">
    <property type="term" value="F:rRNA binding"/>
    <property type="evidence" value="ECO:0007669"/>
    <property type="project" value="UniProtKB-UniRule"/>
</dbReference>
<dbReference type="GO" id="GO:0003735">
    <property type="term" value="F:structural constituent of ribosome"/>
    <property type="evidence" value="ECO:0007669"/>
    <property type="project" value="InterPro"/>
</dbReference>
<dbReference type="GO" id="GO:0000049">
    <property type="term" value="F:tRNA binding"/>
    <property type="evidence" value="ECO:0007669"/>
    <property type="project" value="UniProtKB-UniRule"/>
</dbReference>
<dbReference type="GO" id="GO:0006412">
    <property type="term" value="P:translation"/>
    <property type="evidence" value="ECO:0007669"/>
    <property type="project" value="UniProtKB-UniRule"/>
</dbReference>
<dbReference type="FunFam" id="1.10.8.50:FF:000001">
    <property type="entry name" value="30S ribosomal protein S13"/>
    <property type="match status" value="1"/>
</dbReference>
<dbReference type="FunFam" id="4.10.910.10:FF:000001">
    <property type="entry name" value="30S ribosomal protein S13"/>
    <property type="match status" value="1"/>
</dbReference>
<dbReference type="Gene3D" id="1.10.8.50">
    <property type="match status" value="1"/>
</dbReference>
<dbReference type="Gene3D" id="4.10.910.10">
    <property type="entry name" value="30s ribosomal protein s13, domain 2"/>
    <property type="match status" value="1"/>
</dbReference>
<dbReference type="HAMAP" id="MF_01315">
    <property type="entry name" value="Ribosomal_uS13"/>
    <property type="match status" value="1"/>
</dbReference>
<dbReference type="InterPro" id="IPR027437">
    <property type="entry name" value="Rbsml_uS13_C"/>
</dbReference>
<dbReference type="InterPro" id="IPR001892">
    <property type="entry name" value="Ribosomal_uS13"/>
</dbReference>
<dbReference type="InterPro" id="IPR010979">
    <property type="entry name" value="Ribosomal_uS13-like_H2TH"/>
</dbReference>
<dbReference type="InterPro" id="IPR019980">
    <property type="entry name" value="Ribosomal_uS13_bac-type"/>
</dbReference>
<dbReference type="InterPro" id="IPR018269">
    <property type="entry name" value="Ribosomal_uS13_CS"/>
</dbReference>
<dbReference type="NCBIfam" id="TIGR03631">
    <property type="entry name" value="uS13_bact"/>
    <property type="match status" value="1"/>
</dbReference>
<dbReference type="PANTHER" id="PTHR10871">
    <property type="entry name" value="30S RIBOSOMAL PROTEIN S13/40S RIBOSOMAL PROTEIN S18"/>
    <property type="match status" value="1"/>
</dbReference>
<dbReference type="PANTHER" id="PTHR10871:SF1">
    <property type="entry name" value="SMALL RIBOSOMAL SUBUNIT PROTEIN US13M"/>
    <property type="match status" value="1"/>
</dbReference>
<dbReference type="Pfam" id="PF00416">
    <property type="entry name" value="Ribosomal_S13"/>
    <property type="match status" value="1"/>
</dbReference>
<dbReference type="PIRSF" id="PIRSF002134">
    <property type="entry name" value="Ribosomal_S13"/>
    <property type="match status" value="1"/>
</dbReference>
<dbReference type="SUPFAM" id="SSF46946">
    <property type="entry name" value="S13-like H2TH domain"/>
    <property type="match status" value="1"/>
</dbReference>
<dbReference type="PROSITE" id="PS00646">
    <property type="entry name" value="RIBOSOMAL_S13_1"/>
    <property type="match status" value="1"/>
</dbReference>
<dbReference type="PROSITE" id="PS50159">
    <property type="entry name" value="RIBOSOMAL_S13_2"/>
    <property type="match status" value="1"/>
</dbReference>
<keyword id="KW-1185">Reference proteome</keyword>
<keyword id="KW-0687">Ribonucleoprotein</keyword>
<keyword id="KW-0689">Ribosomal protein</keyword>
<keyword id="KW-0694">RNA-binding</keyword>
<keyword id="KW-0699">rRNA-binding</keyword>
<keyword id="KW-0820">tRNA-binding</keyword>